<sequence length="870" mass="97927">MAKVVETPLMKQYFDIKAKHPDAILLFRVGDFYEMYGEDAVIGAEILGIVQTKRANGVGQHVEMAGFPHHALDSYLPKLVRAGKRVAICDQLEDPKLTKKLVKRGITELVTPGVSINDNILNHKENNFLASIHFAKEVCGISFLDISTGEFMTAEGSIDYIDKLLNNFSPKEVLIERGNKKRFEEAFGPRFFIFELDDWIFTTSAAEDRLLKHFETKNLKGFGVQHLKLGIIASGAILYYLDQTQHTHISHITALSRIEEDRYVRLDKFTVRSLELVGTMNDEGTSLLDVIDKTISPMGSRMLRRWILFPLKDVKPIQERQEVVDYFFREPETKELLDTQLEQIGDLERIISKVAVGRVSPREVVQLKVALRAIEPIKEACMASGEPSLCRIGEQLNACALIRDRIEKEINNDPPSLVNKGGIIAKGVNEELDDLRAIAYSGKDYLLKVQQREIELTGIPSLKIAFNNVFGYYIEVRNTHKDKVPANWIRKQTLVNAERYITEELKEYEEKILGAEEKILALETRLFNELVLALTEYIPPIQMNANLIGRIDCLLSFAKAAEANKYIRPVVSDSDKIDIKGGRHPVIEKQLPLGEPYIANDVYLDDEKQQIIIITGPNMAGKSALLRQTALITLMAQIGCFVPAESAHIGIVDKIFTRVGASDNISVGESTFMVEMNEASDILNNMTSRSLVLFDELGRGTSTYDGISIAWAIVEYIHEHPNAKAKTLFATHYHELNEMERAFKRIKNYNVSVKEVGNKVIFLRKLIPGGSEHSFGIHVAKMAGMPKSIVKRSNEILKQLESENRQEGITGKPVKAIASAAEGYQLSFFQLDDPVLSQVRDEIKNLDVNNLTPLEALNKLIEIKRIITGK</sequence>
<name>MUTS_PARD8</name>
<gene>
    <name evidence="1" type="primary">mutS</name>
    <name type="ordered locus">BDI_2998</name>
</gene>
<reference key="1">
    <citation type="journal article" date="2007" name="PLoS Biol.">
        <title>Evolution of symbiotic bacteria in the distal human intestine.</title>
        <authorList>
            <person name="Xu J."/>
            <person name="Mahowald M.A."/>
            <person name="Ley R.E."/>
            <person name="Lozupone C.A."/>
            <person name="Hamady M."/>
            <person name="Martens E.C."/>
            <person name="Henrissat B."/>
            <person name="Coutinho P.M."/>
            <person name="Minx P."/>
            <person name="Latreille P."/>
            <person name="Cordum H."/>
            <person name="Van Brunt A."/>
            <person name="Kim K."/>
            <person name="Fulton R.S."/>
            <person name="Fulton L.A."/>
            <person name="Clifton S.W."/>
            <person name="Wilson R.K."/>
            <person name="Knight R.D."/>
            <person name="Gordon J.I."/>
        </authorList>
    </citation>
    <scope>NUCLEOTIDE SEQUENCE [LARGE SCALE GENOMIC DNA]</scope>
    <source>
        <strain>ATCC 8503 / DSM 20701 / CIP 104284 / JCM 5825 / NCTC 11152</strain>
    </source>
</reference>
<comment type="function">
    <text evidence="1">This protein is involved in the repair of mismatches in DNA. It is possible that it carries out the mismatch recognition step. This protein has a weak ATPase activity.</text>
</comment>
<comment type="similarity">
    <text evidence="1">Belongs to the DNA mismatch repair MutS family.</text>
</comment>
<proteinExistence type="inferred from homology"/>
<evidence type="ECO:0000255" key="1">
    <source>
        <dbReference type="HAMAP-Rule" id="MF_00096"/>
    </source>
</evidence>
<feature type="chain" id="PRO_0000335190" description="DNA mismatch repair protein MutS">
    <location>
        <begin position="1"/>
        <end position="870"/>
    </location>
</feature>
<feature type="binding site" evidence="1">
    <location>
        <begin position="616"/>
        <end position="623"/>
    </location>
    <ligand>
        <name>ATP</name>
        <dbReference type="ChEBI" id="CHEBI:30616"/>
    </ligand>
</feature>
<dbReference type="EMBL" id="CP000140">
    <property type="protein sequence ID" value="ABR44706.1"/>
    <property type="molecule type" value="Genomic_DNA"/>
</dbReference>
<dbReference type="RefSeq" id="WP_011967099.1">
    <property type="nucleotide sequence ID" value="NC_009615.1"/>
</dbReference>
<dbReference type="SMR" id="A6LG92"/>
<dbReference type="STRING" id="435591.BDI_2998"/>
<dbReference type="PaxDb" id="435591-BDI_2998"/>
<dbReference type="KEGG" id="pdi:BDI_2998"/>
<dbReference type="PATRIC" id="fig|435591.13.peg.2957"/>
<dbReference type="eggNOG" id="COG0249">
    <property type="taxonomic scope" value="Bacteria"/>
</dbReference>
<dbReference type="HOGENOM" id="CLU_002472_1_3_10"/>
<dbReference type="BioCyc" id="PDIS435591:G1G5A-3075-MONOMER"/>
<dbReference type="Proteomes" id="UP000000566">
    <property type="component" value="Chromosome"/>
</dbReference>
<dbReference type="GO" id="GO:0005829">
    <property type="term" value="C:cytosol"/>
    <property type="evidence" value="ECO:0007669"/>
    <property type="project" value="TreeGrafter"/>
</dbReference>
<dbReference type="GO" id="GO:0005524">
    <property type="term" value="F:ATP binding"/>
    <property type="evidence" value="ECO:0007669"/>
    <property type="project" value="UniProtKB-UniRule"/>
</dbReference>
<dbReference type="GO" id="GO:0140664">
    <property type="term" value="F:ATP-dependent DNA damage sensor activity"/>
    <property type="evidence" value="ECO:0007669"/>
    <property type="project" value="InterPro"/>
</dbReference>
<dbReference type="GO" id="GO:0003684">
    <property type="term" value="F:damaged DNA binding"/>
    <property type="evidence" value="ECO:0007669"/>
    <property type="project" value="UniProtKB-UniRule"/>
</dbReference>
<dbReference type="GO" id="GO:0030983">
    <property type="term" value="F:mismatched DNA binding"/>
    <property type="evidence" value="ECO:0007669"/>
    <property type="project" value="InterPro"/>
</dbReference>
<dbReference type="GO" id="GO:0006298">
    <property type="term" value="P:mismatch repair"/>
    <property type="evidence" value="ECO:0007669"/>
    <property type="project" value="UniProtKB-UniRule"/>
</dbReference>
<dbReference type="CDD" id="cd03284">
    <property type="entry name" value="ABC_MutS1"/>
    <property type="match status" value="1"/>
</dbReference>
<dbReference type="FunFam" id="1.10.1420.10:FF:000002">
    <property type="entry name" value="DNA mismatch repair protein MutS"/>
    <property type="match status" value="1"/>
</dbReference>
<dbReference type="FunFam" id="3.40.1170.10:FF:000001">
    <property type="entry name" value="DNA mismatch repair protein MutS"/>
    <property type="match status" value="1"/>
</dbReference>
<dbReference type="Gene3D" id="1.10.1420.10">
    <property type="match status" value="2"/>
</dbReference>
<dbReference type="Gene3D" id="3.40.1170.10">
    <property type="entry name" value="DNA repair protein MutS, domain I"/>
    <property type="match status" value="1"/>
</dbReference>
<dbReference type="Gene3D" id="3.30.420.110">
    <property type="entry name" value="MutS, connector domain"/>
    <property type="match status" value="1"/>
</dbReference>
<dbReference type="Gene3D" id="3.40.50.300">
    <property type="entry name" value="P-loop containing nucleotide triphosphate hydrolases"/>
    <property type="match status" value="1"/>
</dbReference>
<dbReference type="HAMAP" id="MF_00096">
    <property type="entry name" value="MutS"/>
    <property type="match status" value="1"/>
</dbReference>
<dbReference type="InterPro" id="IPR005748">
    <property type="entry name" value="DNA_mismatch_repair_MutS"/>
</dbReference>
<dbReference type="InterPro" id="IPR007695">
    <property type="entry name" value="DNA_mismatch_repair_MutS-lik_N"/>
</dbReference>
<dbReference type="InterPro" id="IPR017261">
    <property type="entry name" value="DNA_mismatch_repair_MutS/MSH"/>
</dbReference>
<dbReference type="InterPro" id="IPR000432">
    <property type="entry name" value="DNA_mismatch_repair_MutS_C"/>
</dbReference>
<dbReference type="InterPro" id="IPR007861">
    <property type="entry name" value="DNA_mismatch_repair_MutS_clamp"/>
</dbReference>
<dbReference type="InterPro" id="IPR007696">
    <property type="entry name" value="DNA_mismatch_repair_MutS_core"/>
</dbReference>
<dbReference type="InterPro" id="IPR016151">
    <property type="entry name" value="DNA_mismatch_repair_MutS_N"/>
</dbReference>
<dbReference type="InterPro" id="IPR036187">
    <property type="entry name" value="DNA_mismatch_repair_MutS_sf"/>
</dbReference>
<dbReference type="InterPro" id="IPR007860">
    <property type="entry name" value="DNA_mmatch_repair_MutS_con_dom"/>
</dbReference>
<dbReference type="InterPro" id="IPR045076">
    <property type="entry name" value="MutS"/>
</dbReference>
<dbReference type="InterPro" id="IPR036678">
    <property type="entry name" value="MutS_con_dom_sf"/>
</dbReference>
<dbReference type="InterPro" id="IPR027417">
    <property type="entry name" value="P-loop_NTPase"/>
</dbReference>
<dbReference type="NCBIfam" id="TIGR01070">
    <property type="entry name" value="mutS1"/>
    <property type="match status" value="1"/>
</dbReference>
<dbReference type="NCBIfam" id="NF003810">
    <property type="entry name" value="PRK05399.1"/>
    <property type="match status" value="1"/>
</dbReference>
<dbReference type="PANTHER" id="PTHR11361:SF34">
    <property type="entry name" value="DNA MISMATCH REPAIR PROTEIN MSH1, MITOCHONDRIAL"/>
    <property type="match status" value="1"/>
</dbReference>
<dbReference type="PANTHER" id="PTHR11361">
    <property type="entry name" value="DNA MISMATCH REPAIR PROTEIN MUTS FAMILY MEMBER"/>
    <property type="match status" value="1"/>
</dbReference>
<dbReference type="Pfam" id="PF01624">
    <property type="entry name" value="MutS_I"/>
    <property type="match status" value="1"/>
</dbReference>
<dbReference type="Pfam" id="PF05188">
    <property type="entry name" value="MutS_II"/>
    <property type="match status" value="1"/>
</dbReference>
<dbReference type="Pfam" id="PF05192">
    <property type="entry name" value="MutS_III"/>
    <property type="match status" value="1"/>
</dbReference>
<dbReference type="Pfam" id="PF05190">
    <property type="entry name" value="MutS_IV"/>
    <property type="match status" value="1"/>
</dbReference>
<dbReference type="Pfam" id="PF00488">
    <property type="entry name" value="MutS_V"/>
    <property type="match status" value="1"/>
</dbReference>
<dbReference type="PIRSF" id="PIRSF037677">
    <property type="entry name" value="DNA_mis_repair_Msh6"/>
    <property type="match status" value="1"/>
</dbReference>
<dbReference type="SMART" id="SM00534">
    <property type="entry name" value="MUTSac"/>
    <property type="match status" value="1"/>
</dbReference>
<dbReference type="SMART" id="SM00533">
    <property type="entry name" value="MUTSd"/>
    <property type="match status" value="1"/>
</dbReference>
<dbReference type="SUPFAM" id="SSF55271">
    <property type="entry name" value="DNA repair protein MutS, domain I"/>
    <property type="match status" value="1"/>
</dbReference>
<dbReference type="SUPFAM" id="SSF53150">
    <property type="entry name" value="DNA repair protein MutS, domain II"/>
    <property type="match status" value="1"/>
</dbReference>
<dbReference type="SUPFAM" id="SSF48334">
    <property type="entry name" value="DNA repair protein MutS, domain III"/>
    <property type="match status" value="1"/>
</dbReference>
<dbReference type="SUPFAM" id="SSF52540">
    <property type="entry name" value="P-loop containing nucleoside triphosphate hydrolases"/>
    <property type="match status" value="1"/>
</dbReference>
<dbReference type="PROSITE" id="PS00486">
    <property type="entry name" value="DNA_MISMATCH_REPAIR_2"/>
    <property type="match status" value="1"/>
</dbReference>
<protein>
    <recommendedName>
        <fullName evidence="1">DNA mismatch repair protein MutS</fullName>
    </recommendedName>
</protein>
<accession>A6LG92</accession>
<organism>
    <name type="scientific">Parabacteroides distasonis (strain ATCC 8503 / DSM 20701 / CIP 104284 / JCM 5825 / NCTC 11152)</name>
    <dbReference type="NCBI Taxonomy" id="435591"/>
    <lineage>
        <taxon>Bacteria</taxon>
        <taxon>Pseudomonadati</taxon>
        <taxon>Bacteroidota</taxon>
        <taxon>Bacteroidia</taxon>
        <taxon>Bacteroidales</taxon>
        <taxon>Tannerellaceae</taxon>
        <taxon>Parabacteroides</taxon>
    </lineage>
</organism>
<keyword id="KW-0067">ATP-binding</keyword>
<keyword id="KW-0227">DNA damage</keyword>
<keyword id="KW-0234">DNA repair</keyword>
<keyword id="KW-0238">DNA-binding</keyword>
<keyword id="KW-0547">Nucleotide-binding</keyword>
<keyword id="KW-1185">Reference proteome</keyword>